<comment type="function">
    <text evidence="1">Nucleotidase with a broad substrate specificity as it can dephosphorylate various ribo- and deoxyribonucleoside 5'-monophosphates and ribonucleoside 3'-monophosphates with highest affinity to 3'-AMP. Also hydrolyzes polyphosphate (exopolyphosphatase activity) with the preference for short-chain-length substrates (P20-25). Might be involved in the regulation of dNTP and NTP pools, and in the turnover of 3'-mononucleotides produced by numerous intracellular RNases (T1, T2, and F) during the degradation of various RNAs.</text>
</comment>
<comment type="catalytic activity">
    <reaction evidence="1">
        <text>a ribonucleoside 5'-phosphate + H2O = a ribonucleoside + phosphate</text>
        <dbReference type="Rhea" id="RHEA:12484"/>
        <dbReference type="ChEBI" id="CHEBI:15377"/>
        <dbReference type="ChEBI" id="CHEBI:18254"/>
        <dbReference type="ChEBI" id="CHEBI:43474"/>
        <dbReference type="ChEBI" id="CHEBI:58043"/>
        <dbReference type="EC" id="3.1.3.5"/>
    </reaction>
</comment>
<comment type="catalytic activity">
    <reaction evidence="1">
        <text>a ribonucleoside 3'-phosphate + H2O = a ribonucleoside + phosphate</text>
        <dbReference type="Rhea" id="RHEA:10144"/>
        <dbReference type="ChEBI" id="CHEBI:13197"/>
        <dbReference type="ChEBI" id="CHEBI:15377"/>
        <dbReference type="ChEBI" id="CHEBI:18254"/>
        <dbReference type="ChEBI" id="CHEBI:43474"/>
        <dbReference type="EC" id="3.1.3.6"/>
    </reaction>
</comment>
<comment type="catalytic activity">
    <reaction evidence="1">
        <text>[phosphate](n) + H2O = [phosphate](n-1) + phosphate + H(+)</text>
        <dbReference type="Rhea" id="RHEA:21528"/>
        <dbReference type="Rhea" id="RHEA-COMP:9859"/>
        <dbReference type="Rhea" id="RHEA-COMP:14279"/>
        <dbReference type="ChEBI" id="CHEBI:15377"/>
        <dbReference type="ChEBI" id="CHEBI:15378"/>
        <dbReference type="ChEBI" id="CHEBI:16838"/>
        <dbReference type="ChEBI" id="CHEBI:43474"/>
        <dbReference type="EC" id="3.6.1.11"/>
    </reaction>
</comment>
<comment type="cofactor">
    <cofactor evidence="1">
        <name>a divalent metal cation</name>
        <dbReference type="ChEBI" id="CHEBI:60240"/>
    </cofactor>
    <text evidence="1">Binds 1 divalent metal cation per subunit.</text>
</comment>
<comment type="subcellular location">
    <subcellularLocation>
        <location evidence="1">Cytoplasm</location>
    </subcellularLocation>
</comment>
<comment type="similarity">
    <text evidence="1">Belongs to the SurE nucleotidase family.</text>
</comment>
<proteinExistence type="inferred from homology"/>
<organism>
    <name type="scientific">Salmonella newport (strain SL254)</name>
    <dbReference type="NCBI Taxonomy" id="423368"/>
    <lineage>
        <taxon>Bacteria</taxon>
        <taxon>Pseudomonadati</taxon>
        <taxon>Pseudomonadota</taxon>
        <taxon>Gammaproteobacteria</taxon>
        <taxon>Enterobacterales</taxon>
        <taxon>Enterobacteriaceae</taxon>
        <taxon>Salmonella</taxon>
    </lineage>
</organism>
<name>SURE_SALNS</name>
<feature type="chain" id="PRO_1000092034" description="5'/3'-nucleotidase SurE">
    <location>
        <begin position="1"/>
        <end position="253"/>
    </location>
</feature>
<feature type="binding site" evidence="1">
    <location>
        <position position="8"/>
    </location>
    <ligand>
        <name>a divalent metal cation</name>
        <dbReference type="ChEBI" id="CHEBI:60240"/>
    </ligand>
</feature>
<feature type="binding site" evidence="1">
    <location>
        <position position="9"/>
    </location>
    <ligand>
        <name>a divalent metal cation</name>
        <dbReference type="ChEBI" id="CHEBI:60240"/>
    </ligand>
</feature>
<feature type="binding site" evidence="1">
    <location>
        <position position="39"/>
    </location>
    <ligand>
        <name>a divalent metal cation</name>
        <dbReference type="ChEBI" id="CHEBI:60240"/>
    </ligand>
</feature>
<feature type="binding site" evidence="1">
    <location>
        <position position="92"/>
    </location>
    <ligand>
        <name>a divalent metal cation</name>
        <dbReference type="ChEBI" id="CHEBI:60240"/>
    </ligand>
</feature>
<dbReference type="EC" id="3.1.3.5" evidence="1"/>
<dbReference type="EC" id="3.1.3.6" evidence="1"/>
<dbReference type="EC" id="3.6.1.11" evidence="1"/>
<dbReference type="EMBL" id="CP001113">
    <property type="protein sequence ID" value="ACF65237.1"/>
    <property type="molecule type" value="Genomic_DNA"/>
</dbReference>
<dbReference type="RefSeq" id="WP_001221538.1">
    <property type="nucleotide sequence ID" value="NZ_CCMR01000001.1"/>
</dbReference>
<dbReference type="SMR" id="B4T454"/>
<dbReference type="KEGG" id="see:SNSL254_A3133"/>
<dbReference type="HOGENOM" id="CLU_045192_1_2_6"/>
<dbReference type="Proteomes" id="UP000008824">
    <property type="component" value="Chromosome"/>
</dbReference>
<dbReference type="GO" id="GO:0005737">
    <property type="term" value="C:cytoplasm"/>
    <property type="evidence" value="ECO:0007669"/>
    <property type="project" value="UniProtKB-SubCell"/>
</dbReference>
<dbReference type="GO" id="GO:0008254">
    <property type="term" value="F:3'-nucleotidase activity"/>
    <property type="evidence" value="ECO:0007669"/>
    <property type="project" value="UniProtKB-UniRule"/>
</dbReference>
<dbReference type="GO" id="GO:0008253">
    <property type="term" value="F:5'-nucleotidase activity"/>
    <property type="evidence" value="ECO:0007669"/>
    <property type="project" value="UniProtKB-UniRule"/>
</dbReference>
<dbReference type="GO" id="GO:0004309">
    <property type="term" value="F:exopolyphosphatase activity"/>
    <property type="evidence" value="ECO:0007669"/>
    <property type="project" value="UniProtKB-UniRule"/>
</dbReference>
<dbReference type="GO" id="GO:0046872">
    <property type="term" value="F:metal ion binding"/>
    <property type="evidence" value="ECO:0007669"/>
    <property type="project" value="UniProtKB-UniRule"/>
</dbReference>
<dbReference type="GO" id="GO:0000166">
    <property type="term" value="F:nucleotide binding"/>
    <property type="evidence" value="ECO:0007669"/>
    <property type="project" value="UniProtKB-KW"/>
</dbReference>
<dbReference type="FunFam" id="3.40.1210.10:FF:000001">
    <property type="entry name" value="5'/3'-nucleotidase SurE"/>
    <property type="match status" value="1"/>
</dbReference>
<dbReference type="Gene3D" id="3.40.1210.10">
    <property type="entry name" value="Survival protein SurE-like phosphatase/nucleotidase"/>
    <property type="match status" value="1"/>
</dbReference>
<dbReference type="HAMAP" id="MF_00060">
    <property type="entry name" value="SurE"/>
    <property type="match status" value="1"/>
</dbReference>
<dbReference type="InterPro" id="IPR030048">
    <property type="entry name" value="SurE"/>
</dbReference>
<dbReference type="InterPro" id="IPR002828">
    <property type="entry name" value="SurE-like_Pase/nucleotidase"/>
</dbReference>
<dbReference type="InterPro" id="IPR036523">
    <property type="entry name" value="SurE-like_sf"/>
</dbReference>
<dbReference type="NCBIfam" id="NF001488">
    <property type="entry name" value="PRK00346.1-1"/>
    <property type="match status" value="1"/>
</dbReference>
<dbReference type="NCBIfam" id="NF001489">
    <property type="entry name" value="PRK00346.1-3"/>
    <property type="match status" value="1"/>
</dbReference>
<dbReference type="NCBIfam" id="NF001490">
    <property type="entry name" value="PRK00346.1-4"/>
    <property type="match status" value="1"/>
</dbReference>
<dbReference type="NCBIfam" id="TIGR00087">
    <property type="entry name" value="surE"/>
    <property type="match status" value="1"/>
</dbReference>
<dbReference type="PANTHER" id="PTHR30457">
    <property type="entry name" value="5'-NUCLEOTIDASE SURE"/>
    <property type="match status" value="1"/>
</dbReference>
<dbReference type="PANTHER" id="PTHR30457:SF12">
    <property type="entry name" value="5'_3'-NUCLEOTIDASE SURE"/>
    <property type="match status" value="1"/>
</dbReference>
<dbReference type="Pfam" id="PF01975">
    <property type="entry name" value="SurE"/>
    <property type="match status" value="1"/>
</dbReference>
<dbReference type="SUPFAM" id="SSF64167">
    <property type="entry name" value="SurE-like"/>
    <property type="match status" value="1"/>
</dbReference>
<gene>
    <name evidence="1" type="primary">surE</name>
    <name type="ordered locus">SNSL254_A3133</name>
</gene>
<sequence length="253" mass="26980">MRILLSNDDGVHAPGIQTLAKALREFADVQVVAPDRNRSGASNSLTLESSLRTFTFDNGDIAVQMGTPTDCVYLGVNALMRPRPDIVVSGINAGPNLGDDVIYSGTVAAAMEGRHLGFPALAVSLNGYQHYDTAAAVTCALLRGLSREPLRTGRILNVNVPDLPLAQVKGIRVTRCGSRHPADKVIPQEDPRGNTLYWIGPPGDKYDAGPDTDFAAVDEGYVSVTPLHVDLTAHSAHDVVSDWLDSVGVGTQW</sequence>
<protein>
    <recommendedName>
        <fullName evidence="1">5'/3'-nucleotidase SurE</fullName>
        <ecNumber evidence="1">3.1.3.5</ecNumber>
        <ecNumber evidence="1">3.1.3.6</ecNumber>
    </recommendedName>
    <alternativeName>
        <fullName evidence="1">Exopolyphosphatase</fullName>
        <ecNumber evidence="1">3.6.1.11</ecNumber>
    </alternativeName>
    <alternativeName>
        <fullName evidence="1">Nucleoside monophosphate phosphohydrolase</fullName>
    </alternativeName>
</protein>
<keyword id="KW-0963">Cytoplasm</keyword>
<keyword id="KW-0378">Hydrolase</keyword>
<keyword id="KW-0479">Metal-binding</keyword>
<keyword id="KW-0547">Nucleotide-binding</keyword>
<evidence type="ECO:0000255" key="1">
    <source>
        <dbReference type="HAMAP-Rule" id="MF_00060"/>
    </source>
</evidence>
<accession>B4T454</accession>
<reference key="1">
    <citation type="journal article" date="2011" name="J. Bacteriol.">
        <title>Comparative genomics of 28 Salmonella enterica isolates: evidence for CRISPR-mediated adaptive sublineage evolution.</title>
        <authorList>
            <person name="Fricke W.F."/>
            <person name="Mammel M.K."/>
            <person name="McDermott P.F."/>
            <person name="Tartera C."/>
            <person name="White D.G."/>
            <person name="Leclerc J.E."/>
            <person name="Ravel J."/>
            <person name="Cebula T.A."/>
        </authorList>
    </citation>
    <scope>NUCLEOTIDE SEQUENCE [LARGE SCALE GENOMIC DNA]</scope>
    <source>
        <strain>SL254</strain>
    </source>
</reference>